<keyword id="KW-0966">Cell projection</keyword>
<keyword id="KW-0970">Cilium biogenesis/degradation</keyword>
<keyword id="KW-0175">Coiled coil</keyword>
<keyword id="KW-0963">Cytoplasm</keyword>
<keyword id="KW-0206">Cytoskeleton</keyword>
<keyword id="KW-0597">Phosphoprotein</keyword>
<keyword id="KW-1185">Reference proteome</keyword>
<keyword id="KW-0677">Repeat</keyword>
<keyword id="KW-0853">WD repeat</keyword>
<evidence type="ECO:0000250" key="1"/>
<evidence type="ECO:0000250" key="2">
    <source>
        <dbReference type="UniProtKB" id="Q8TC44"/>
    </source>
</evidence>
<evidence type="ECO:0000255" key="3"/>
<evidence type="ECO:0000269" key="4">
    <source>
    </source>
</evidence>
<evidence type="ECO:0000305" key="5"/>
<protein>
    <recommendedName>
        <fullName>POC1 centriolar protein homolog B</fullName>
    </recommendedName>
    <alternativeName>
        <fullName>WD repeat-containing protein 51B</fullName>
    </alternativeName>
</protein>
<feature type="chain" id="PRO_0000051411" description="POC1 centriolar protein homolog B">
    <location>
        <begin position="1"/>
        <end position="476"/>
    </location>
</feature>
<feature type="repeat" description="WD 1">
    <location>
        <begin position="16"/>
        <end position="55"/>
    </location>
</feature>
<feature type="repeat" description="WD 2">
    <location>
        <begin position="58"/>
        <end position="97"/>
    </location>
</feature>
<feature type="repeat" description="WD 3">
    <location>
        <begin position="100"/>
        <end position="139"/>
    </location>
</feature>
<feature type="repeat" description="WD 4">
    <location>
        <begin position="142"/>
        <end position="181"/>
    </location>
</feature>
<feature type="repeat" description="WD 5">
    <location>
        <begin position="183"/>
        <end position="223"/>
    </location>
</feature>
<feature type="repeat" description="WD 6">
    <location>
        <begin position="226"/>
        <end position="265"/>
    </location>
</feature>
<feature type="repeat" description="WD 7">
    <location>
        <begin position="268"/>
        <end position="307"/>
    </location>
</feature>
<feature type="coiled-coil region" evidence="3">
    <location>
        <begin position="429"/>
        <end position="468"/>
    </location>
</feature>
<organism>
    <name type="scientific">Mus musculus</name>
    <name type="common">Mouse</name>
    <dbReference type="NCBI Taxonomy" id="10090"/>
    <lineage>
        <taxon>Eukaryota</taxon>
        <taxon>Metazoa</taxon>
        <taxon>Chordata</taxon>
        <taxon>Craniata</taxon>
        <taxon>Vertebrata</taxon>
        <taxon>Euteleostomi</taxon>
        <taxon>Mammalia</taxon>
        <taxon>Eutheria</taxon>
        <taxon>Euarchontoglires</taxon>
        <taxon>Glires</taxon>
        <taxon>Rodentia</taxon>
        <taxon>Myomorpha</taxon>
        <taxon>Muroidea</taxon>
        <taxon>Muridae</taxon>
        <taxon>Murinae</taxon>
        <taxon>Mus</taxon>
        <taxon>Mus</taxon>
    </lineage>
</organism>
<dbReference type="EMBL" id="AK045302">
    <property type="protein sequence ID" value="BAC32302.1"/>
    <property type="molecule type" value="mRNA"/>
</dbReference>
<dbReference type="EMBL" id="AK050233">
    <property type="protein sequence ID" value="BAC34138.1"/>
    <property type="molecule type" value="mRNA"/>
</dbReference>
<dbReference type="EMBL" id="AK090075">
    <property type="protein sequence ID" value="BAC41080.1"/>
    <property type="molecule type" value="mRNA"/>
</dbReference>
<dbReference type="CCDS" id="CCDS36045.1"/>
<dbReference type="RefSeq" id="NP_082016.1">
    <property type="nucleotide sequence ID" value="NM_027740.7"/>
</dbReference>
<dbReference type="SMR" id="Q8BHD1"/>
<dbReference type="BioGRID" id="238351">
    <property type="interactions" value="23"/>
</dbReference>
<dbReference type="FunCoup" id="Q8BHD1">
    <property type="interactions" value="475"/>
</dbReference>
<dbReference type="IntAct" id="Q8BHD1">
    <property type="interactions" value="25"/>
</dbReference>
<dbReference type="STRING" id="10090.ENSMUSP00000020113"/>
<dbReference type="iPTMnet" id="Q8BHD1"/>
<dbReference type="PhosphoSitePlus" id="Q8BHD1"/>
<dbReference type="PaxDb" id="10090-ENSMUSP00000020113"/>
<dbReference type="ProteomicsDB" id="289866"/>
<dbReference type="Antibodypedia" id="29964">
    <property type="antibodies" value="118 antibodies from 22 providers"/>
</dbReference>
<dbReference type="DNASU" id="382406"/>
<dbReference type="Ensembl" id="ENSMUST00000020113.15">
    <property type="protein sequence ID" value="ENSMUSP00000020113.9"/>
    <property type="gene ID" value="ENSMUSG00000019952.16"/>
</dbReference>
<dbReference type="GeneID" id="382406"/>
<dbReference type="KEGG" id="mmu:382406"/>
<dbReference type="UCSC" id="uc007gxh.1">
    <property type="organism name" value="mouse"/>
</dbReference>
<dbReference type="AGR" id="MGI:1918511"/>
<dbReference type="CTD" id="282809"/>
<dbReference type="MGI" id="MGI:1918511">
    <property type="gene designation" value="Poc1b"/>
</dbReference>
<dbReference type="VEuPathDB" id="HostDB:ENSMUSG00000019952"/>
<dbReference type="eggNOG" id="ENOG502QSVJ">
    <property type="taxonomic scope" value="Eukaryota"/>
</dbReference>
<dbReference type="GeneTree" id="ENSGT00940000160413"/>
<dbReference type="InParanoid" id="Q8BHD1"/>
<dbReference type="OMA" id="MIKFHPK"/>
<dbReference type="OrthoDB" id="10264588at2759"/>
<dbReference type="PhylomeDB" id="Q8BHD1"/>
<dbReference type="TreeFam" id="TF324210"/>
<dbReference type="BioGRID-ORCS" id="382406">
    <property type="hits" value="1 hit in 78 CRISPR screens"/>
</dbReference>
<dbReference type="ChiTaRS" id="Poc1b">
    <property type="organism name" value="mouse"/>
</dbReference>
<dbReference type="PRO" id="PR:Q8BHD1"/>
<dbReference type="Proteomes" id="UP000000589">
    <property type="component" value="Chromosome 10"/>
</dbReference>
<dbReference type="RNAct" id="Q8BHD1">
    <property type="molecule type" value="protein"/>
</dbReference>
<dbReference type="Bgee" id="ENSMUSG00000019952">
    <property type="expression patterns" value="Expressed in ear vesicle and 172 other cell types or tissues"/>
</dbReference>
<dbReference type="ExpressionAtlas" id="Q8BHD1">
    <property type="expression patterns" value="baseline and differential"/>
</dbReference>
<dbReference type="GO" id="GO:0005814">
    <property type="term" value="C:centriole"/>
    <property type="evidence" value="ECO:0000250"/>
    <property type="project" value="UniProtKB"/>
</dbReference>
<dbReference type="GO" id="GO:0005813">
    <property type="term" value="C:centrosome"/>
    <property type="evidence" value="ECO:0007669"/>
    <property type="project" value="Ensembl"/>
</dbReference>
<dbReference type="GO" id="GO:0036064">
    <property type="term" value="C:ciliary basal body"/>
    <property type="evidence" value="ECO:0000250"/>
    <property type="project" value="UniProtKB"/>
</dbReference>
<dbReference type="GO" id="GO:0005737">
    <property type="term" value="C:cytoplasm"/>
    <property type="evidence" value="ECO:0007669"/>
    <property type="project" value="UniProtKB-KW"/>
</dbReference>
<dbReference type="GO" id="GO:0000922">
    <property type="term" value="C:spindle pole"/>
    <property type="evidence" value="ECO:0000250"/>
    <property type="project" value="UniProtKB"/>
</dbReference>
<dbReference type="GO" id="GO:0001675">
    <property type="term" value="P:acrosome assembly"/>
    <property type="evidence" value="ECO:0000315"/>
    <property type="project" value="MGI"/>
</dbReference>
<dbReference type="GO" id="GO:0000902">
    <property type="term" value="P:cell morphogenesis"/>
    <property type="evidence" value="ECO:0000315"/>
    <property type="project" value="MGI"/>
</dbReference>
<dbReference type="GO" id="GO:0008283">
    <property type="term" value="P:cell population proliferation"/>
    <property type="evidence" value="ECO:0000250"/>
    <property type="project" value="UniProtKB"/>
</dbReference>
<dbReference type="GO" id="GO:0007099">
    <property type="term" value="P:centriole replication"/>
    <property type="evidence" value="ECO:0000250"/>
    <property type="project" value="UniProtKB"/>
</dbReference>
<dbReference type="GO" id="GO:0060271">
    <property type="term" value="P:cilium assembly"/>
    <property type="evidence" value="ECO:0000250"/>
    <property type="project" value="UniProtKB"/>
</dbReference>
<dbReference type="GO" id="GO:0048872">
    <property type="term" value="P:homeostasis of number of cells"/>
    <property type="evidence" value="ECO:0000315"/>
    <property type="project" value="MGI"/>
</dbReference>
<dbReference type="GO" id="GO:1903724">
    <property type="term" value="P:positive regulation of centriole elongation"/>
    <property type="evidence" value="ECO:0000250"/>
    <property type="project" value="UniProtKB"/>
</dbReference>
<dbReference type="GO" id="GO:0001895">
    <property type="term" value="P:retina homeostasis"/>
    <property type="evidence" value="ECO:0000250"/>
    <property type="project" value="UniProtKB"/>
</dbReference>
<dbReference type="GO" id="GO:0007338">
    <property type="term" value="P:single fertilization"/>
    <property type="evidence" value="ECO:0000315"/>
    <property type="project" value="MGI"/>
</dbReference>
<dbReference type="GO" id="GO:0120316">
    <property type="term" value="P:sperm flagellum assembly"/>
    <property type="evidence" value="ECO:0000315"/>
    <property type="project" value="MGI"/>
</dbReference>
<dbReference type="GO" id="GO:0007283">
    <property type="term" value="P:spermatogenesis"/>
    <property type="evidence" value="ECO:0000315"/>
    <property type="project" value="MGI"/>
</dbReference>
<dbReference type="CDD" id="cd00200">
    <property type="entry name" value="WD40"/>
    <property type="match status" value="1"/>
</dbReference>
<dbReference type="FunFam" id="2.130.10.10:FF:000235">
    <property type="entry name" value="POC1 centriolar protein homolog B"/>
    <property type="match status" value="1"/>
</dbReference>
<dbReference type="FunFam" id="2.130.10.10:FF:002091">
    <property type="entry name" value="POC1 centriolar protein homolog B"/>
    <property type="match status" value="1"/>
</dbReference>
<dbReference type="Gene3D" id="2.130.10.10">
    <property type="entry name" value="YVTN repeat-like/Quinoprotein amine dehydrogenase"/>
    <property type="match status" value="3"/>
</dbReference>
<dbReference type="InterPro" id="IPR020472">
    <property type="entry name" value="G-protein_beta_WD-40_rep"/>
</dbReference>
<dbReference type="InterPro" id="IPR015943">
    <property type="entry name" value="WD40/YVTN_repeat-like_dom_sf"/>
</dbReference>
<dbReference type="InterPro" id="IPR019775">
    <property type="entry name" value="WD40_repeat_CS"/>
</dbReference>
<dbReference type="InterPro" id="IPR036322">
    <property type="entry name" value="WD40_repeat_dom_sf"/>
</dbReference>
<dbReference type="InterPro" id="IPR001680">
    <property type="entry name" value="WD40_rpt"/>
</dbReference>
<dbReference type="InterPro" id="IPR050505">
    <property type="entry name" value="WDR55_POC1"/>
</dbReference>
<dbReference type="PANTHER" id="PTHR44019:SF1">
    <property type="entry name" value="POC1 CENTRIOLAR PROTEIN HOMOLOG B"/>
    <property type="match status" value="1"/>
</dbReference>
<dbReference type="PANTHER" id="PTHR44019">
    <property type="entry name" value="WD REPEAT-CONTAINING PROTEIN 55"/>
    <property type="match status" value="1"/>
</dbReference>
<dbReference type="Pfam" id="PF00400">
    <property type="entry name" value="WD40"/>
    <property type="match status" value="7"/>
</dbReference>
<dbReference type="PRINTS" id="PR00320">
    <property type="entry name" value="GPROTEINBRPT"/>
</dbReference>
<dbReference type="SMART" id="SM00320">
    <property type="entry name" value="WD40"/>
    <property type="match status" value="7"/>
</dbReference>
<dbReference type="SUPFAM" id="SSF50978">
    <property type="entry name" value="WD40 repeat-like"/>
    <property type="match status" value="1"/>
</dbReference>
<dbReference type="PROSITE" id="PS00678">
    <property type="entry name" value="WD_REPEATS_1"/>
    <property type="match status" value="2"/>
</dbReference>
<dbReference type="PROSITE" id="PS50082">
    <property type="entry name" value="WD_REPEATS_2"/>
    <property type="match status" value="7"/>
</dbReference>
<dbReference type="PROSITE" id="PS50294">
    <property type="entry name" value="WD_REPEATS_REGION"/>
    <property type="match status" value="1"/>
</dbReference>
<name>POC1B_MOUSE</name>
<comment type="function">
    <text evidence="2">Plays an important role in centriole assembly and/or stability and ciliogenesis. Involved in early steps of centriole duplication, as well as in the later steps of centriole length control. Acts in concert with POC1A to ensure centriole integrity and proper mitotic spindle formation. Required for primary cilia formation, ciliary length and also cell proliferation. Required for retinal integrity. Acts as a positive regulator of centriole elongation.</text>
</comment>
<comment type="subunit">
    <text evidence="2">Interacts with POC1A. Interacts with FAM161A. Interacts with CEP44; the interaction is direct and recruits POC1B to centriolar microtubules. Forms a microtubule-associated complex with POC5, CETN2 and FAM161A. Interacts with CCDC15.</text>
</comment>
<comment type="subcellular location">
    <subcellularLocation>
        <location evidence="4">Cytoplasm</location>
        <location evidence="4">Cytoskeleton</location>
        <location evidence="4">Microtubule organizing center</location>
        <location evidence="4">Centrosome</location>
        <location evidence="4">Centriole</location>
    </subcellularLocation>
    <subcellularLocation>
        <location evidence="4">Cytoplasm</location>
        <location evidence="4">Cytoskeleton</location>
        <location evidence="4">Cilium basal body</location>
    </subcellularLocation>
    <subcellularLocation>
        <location evidence="2">Cytoplasm</location>
        <location evidence="2">Cytoskeleton</location>
        <location evidence="2">Spindle pole</location>
    </subcellularLocation>
    <text evidence="2 4">Component of both mother and daughter centrioles. Localizes to the basal body and centriole adjacent to the connecting cilium of photoreceptors and in synapses of the outer plexiform layer. Localizes to the inner scaffold in the central region of centrioles.</text>
</comment>
<comment type="tissue specificity">
    <text evidence="4">Expressed in the retina.</text>
</comment>
<comment type="PTM">
    <text evidence="1">Phosphorylated in mitotic cells that may be mediated by CDK1.</text>
</comment>
<comment type="similarity">
    <text evidence="5">Belongs to the WD repeat POC1 family.</text>
</comment>
<sequence length="476" mass="53504">MASGLEDPILERSFKGHKAAITSADFSPNCKQIATASWDTFLMLWSLKPHARAYRYVGHKDVVTSLQFSPQGNLLASASRDRTVRLWVLDRKGKSSEFKAHTAPVRSVDFSADGQLLVTASEDKSIKVWSMFRQRFLYSLYRHTHWVRCAKFSPDGRLIVSCSEDKTIKIWDTTNKQCVNNFSDSVGFANFVDFNPNGTCIASAGSDHAVKIWDIRMNKLLQHYQVHSCGVNCLSFHPLGNSLVTASSDGTVKMLDLIEGRLIYTLQGHTGPVFTVSFSKDGELLTSGGADAQVLIWRTNFIHLHCKDPKRNLKRLHFEASPHLLDIYPRSPHSHEDRKETIEINPKREVMDLQSSSPPVVDVLSFDSTTMTDSTYRAVPGKGEDICRYFLNPLLMPECSSTTVKKRPEDVSDVPSESLRSVPLAVADALEHIMEQLNILTQTVSILEQRLSLTEDKLRDCLENQQKLFSAVQQKS</sequence>
<proteinExistence type="evidence at transcript level"/>
<accession>Q8BHD1</accession>
<reference key="1">
    <citation type="journal article" date="2005" name="Science">
        <title>The transcriptional landscape of the mammalian genome.</title>
        <authorList>
            <person name="Carninci P."/>
            <person name="Kasukawa T."/>
            <person name="Katayama S."/>
            <person name="Gough J."/>
            <person name="Frith M.C."/>
            <person name="Maeda N."/>
            <person name="Oyama R."/>
            <person name="Ravasi T."/>
            <person name="Lenhard B."/>
            <person name="Wells C."/>
            <person name="Kodzius R."/>
            <person name="Shimokawa K."/>
            <person name="Bajic V.B."/>
            <person name="Brenner S.E."/>
            <person name="Batalov S."/>
            <person name="Forrest A.R."/>
            <person name="Zavolan M."/>
            <person name="Davis M.J."/>
            <person name="Wilming L.G."/>
            <person name="Aidinis V."/>
            <person name="Allen J.E."/>
            <person name="Ambesi-Impiombato A."/>
            <person name="Apweiler R."/>
            <person name="Aturaliya R.N."/>
            <person name="Bailey T.L."/>
            <person name="Bansal M."/>
            <person name="Baxter L."/>
            <person name="Beisel K.W."/>
            <person name="Bersano T."/>
            <person name="Bono H."/>
            <person name="Chalk A.M."/>
            <person name="Chiu K.P."/>
            <person name="Choudhary V."/>
            <person name="Christoffels A."/>
            <person name="Clutterbuck D.R."/>
            <person name="Crowe M.L."/>
            <person name="Dalla E."/>
            <person name="Dalrymple B.P."/>
            <person name="de Bono B."/>
            <person name="Della Gatta G."/>
            <person name="di Bernardo D."/>
            <person name="Down T."/>
            <person name="Engstrom P."/>
            <person name="Fagiolini M."/>
            <person name="Faulkner G."/>
            <person name="Fletcher C.F."/>
            <person name="Fukushima T."/>
            <person name="Furuno M."/>
            <person name="Futaki S."/>
            <person name="Gariboldi M."/>
            <person name="Georgii-Hemming P."/>
            <person name="Gingeras T.R."/>
            <person name="Gojobori T."/>
            <person name="Green R.E."/>
            <person name="Gustincich S."/>
            <person name="Harbers M."/>
            <person name="Hayashi Y."/>
            <person name="Hensch T.K."/>
            <person name="Hirokawa N."/>
            <person name="Hill D."/>
            <person name="Huminiecki L."/>
            <person name="Iacono M."/>
            <person name="Ikeo K."/>
            <person name="Iwama A."/>
            <person name="Ishikawa T."/>
            <person name="Jakt M."/>
            <person name="Kanapin A."/>
            <person name="Katoh M."/>
            <person name="Kawasawa Y."/>
            <person name="Kelso J."/>
            <person name="Kitamura H."/>
            <person name="Kitano H."/>
            <person name="Kollias G."/>
            <person name="Krishnan S.P."/>
            <person name="Kruger A."/>
            <person name="Kummerfeld S.K."/>
            <person name="Kurochkin I.V."/>
            <person name="Lareau L.F."/>
            <person name="Lazarevic D."/>
            <person name="Lipovich L."/>
            <person name="Liu J."/>
            <person name="Liuni S."/>
            <person name="McWilliam S."/>
            <person name="Madan Babu M."/>
            <person name="Madera M."/>
            <person name="Marchionni L."/>
            <person name="Matsuda H."/>
            <person name="Matsuzawa S."/>
            <person name="Miki H."/>
            <person name="Mignone F."/>
            <person name="Miyake S."/>
            <person name="Morris K."/>
            <person name="Mottagui-Tabar S."/>
            <person name="Mulder N."/>
            <person name="Nakano N."/>
            <person name="Nakauchi H."/>
            <person name="Ng P."/>
            <person name="Nilsson R."/>
            <person name="Nishiguchi S."/>
            <person name="Nishikawa S."/>
            <person name="Nori F."/>
            <person name="Ohara O."/>
            <person name="Okazaki Y."/>
            <person name="Orlando V."/>
            <person name="Pang K.C."/>
            <person name="Pavan W.J."/>
            <person name="Pavesi G."/>
            <person name="Pesole G."/>
            <person name="Petrovsky N."/>
            <person name="Piazza S."/>
            <person name="Reed J."/>
            <person name="Reid J.F."/>
            <person name="Ring B.Z."/>
            <person name="Ringwald M."/>
            <person name="Rost B."/>
            <person name="Ruan Y."/>
            <person name="Salzberg S.L."/>
            <person name="Sandelin A."/>
            <person name="Schneider C."/>
            <person name="Schoenbach C."/>
            <person name="Sekiguchi K."/>
            <person name="Semple C.A."/>
            <person name="Seno S."/>
            <person name="Sessa L."/>
            <person name="Sheng Y."/>
            <person name="Shibata Y."/>
            <person name="Shimada H."/>
            <person name="Shimada K."/>
            <person name="Silva D."/>
            <person name="Sinclair B."/>
            <person name="Sperling S."/>
            <person name="Stupka E."/>
            <person name="Sugiura K."/>
            <person name="Sultana R."/>
            <person name="Takenaka Y."/>
            <person name="Taki K."/>
            <person name="Tammoja K."/>
            <person name="Tan S.L."/>
            <person name="Tang S."/>
            <person name="Taylor M.S."/>
            <person name="Tegner J."/>
            <person name="Teichmann S.A."/>
            <person name="Ueda H.R."/>
            <person name="van Nimwegen E."/>
            <person name="Verardo R."/>
            <person name="Wei C.L."/>
            <person name="Yagi K."/>
            <person name="Yamanishi H."/>
            <person name="Zabarovsky E."/>
            <person name="Zhu S."/>
            <person name="Zimmer A."/>
            <person name="Hide W."/>
            <person name="Bult C."/>
            <person name="Grimmond S.M."/>
            <person name="Teasdale R.D."/>
            <person name="Liu E.T."/>
            <person name="Brusic V."/>
            <person name="Quackenbush J."/>
            <person name="Wahlestedt C."/>
            <person name="Mattick J.S."/>
            <person name="Hume D.A."/>
            <person name="Kai C."/>
            <person name="Sasaki D."/>
            <person name="Tomaru Y."/>
            <person name="Fukuda S."/>
            <person name="Kanamori-Katayama M."/>
            <person name="Suzuki M."/>
            <person name="Aoki J."/>
            <person name="Arakawa T."/>
            <person name="Iida J."/>
            <person name="Imamura K."/>
            <person name="Itoh M."/>
            <person name="Kato T."/>
            <person name="Kawaji H."/>
            <person name="Kawagashira N."/>
            <person name="Kawashima T."/>
            <person name="Kojima M."/>
            <person name="Kondo S."/>
            <person name="Konno H."/>
            <person name="Nakano K."/>
            <person name="Ninomiya N."/>
            <person name="Nishio T."/>
            <person name="Okada M."/>
            <person name="Plessy C."/>
            <person name="Shibata K."/>
            <person name="Shiraki T."/>
            <person name="Suzuki S."/>
            <person name="Tagami M."/>
            <person name="Waki K."/>
            <person name="Watahiki A."/>
            <person name="Okamura-Oho Y."/>
            <person name="Suzuki H."/>
            <person name="Kawai J."/>
            <person name="Hayashizaki Y."/>
        </authorList>
    </citation>
    <scope>NUCLEOTIDE SEQUENCE [LARGE SCALE MRNA]</scope>
    <source>
        <strain>C57BL/6J</strain>
        <tissue>Liver</tissue>
        <tissue>Submandibular gland</tissue>
    </source>
</reference>
<reference key="2">
    <citation type="journal article" date="2014" name="Hum. Mutat.">
        <title>Mutation of POC1B in a severe syndromic retinal ciliopathy.</title>
        <authorList>
            <person name="Beck B.B."/>
            <person name="Phillips J.B."/>
            <person name="Bartram M.P."/>
            <person name="Wegner J."/>
            <person name="Thoenes M."/>
            <person name="Pannes A."/>
            <person name="Sampson J."/>
            <person name="Heller R."/>
            <person name="Goebel H."/>
            <person name="Koerber F."/>
            <person name="Neugebauer A."/>
            <person name="Hedergott A."/>
            <person name="Nuernberg G."/>
            <person name="Nuernberg P."/>
            <person name="Thiele H."/>
            <person name="Altmueller J."/>
            <person name="Toliat M.R."/>
            <person name="Staubach S."/>
            <person name="Boycott K.M."/>
            <person name="Valente E.M."/>
            <person name="Janecke A.R."/>
            <person name="Eisenberger T."/>
            <person name="Bergmann C."/>
            <person name="Tebbe L."/>
            <person name="Wang Y."/>
            <person name="Wu Y."/>
            <person name="Fry A.M."/>
            <person name="Westerfield M."/>
            <person name="Wolfrum U."/>
            <person name="Bolz H.J."/>
        </authorList>
    </citation>
    <scope>SUBCELLULAR LOCATION</scope>
    <scope>TISSUE SPECIFICITY</scope>
</reference>
<gene>
    <name type="primary">Poc1b</name>
    <name type="synonym">Wdr51b</name>
</gene>